<gene>
    <name evidence="14" type="primary">CLPP</name>
</gene>
<evidence type="ECO:0000250" key="1"/>
<evidence type="ECO:0000250" key="2">
    <source>
        <dbReference type="UniProtKB" id="O88696"/>
    </source>
</evidence>
<evidence type="ECO:0000256" key="3">
    <source>
        <dbReference type="SAM" id="MobiDB-lite"/>
    </source>
</evidence>
<evidence type="ECO:0000269" key="4">
    <source>
    </source>
</evidence>
<evidence type="ECO:0000269" key="5">
    <source>
    </source>
</evidence>
<evidence type="ECO:0000269" key="6">
    <source>
    </source>
</evidence>
<evidence type="ECO:0000269" key="7">
    <source>
    </source>
</evidence>
<evidence type="ECO:0000269" key="8">
    <source>
    </source>
</evidence>
<evidence type="ECO:0000269" key="9">
    <source>
    </source>
</evidence>
<evidence type="ECO:0000269" key="10">
    <source>
    </source>
</evidence>
<evidence type="ECO:0000269" key="11">
    <source>
    </source>
</evidence>
<evidence type="ECO:0000269" key="12">
    <source>
    </source>
</evidence>
<evidence type="ECO:0000305" key="13"/>
<evidence type="ECO:0000312" key="14">
    <source>
        <dbReference type="HGNC" id="HGNC:2084"/>
    </source>
</evidence>
<evidence type="ECO:0007744" key="15">
    <source>
    </source>
</evidence>
<evidence type="ECO:0007744" key="16">
    <source>
    </source>
</evidence>
<evidence type="ECO:0007829" key="17">
    <source>
        <dbReference type="PDB" id="1TG6"/>
    </source>
</evidence>
<evidence type="ECO:0007829" key="18">
    <source>
        <dbReference type="PDB" id="7WH5"/>
    </source>
</evidence>
<evidence type="ECO:0007829" key="19">
    <source>
        <dbReference type="PDB" id="8HGK"/>
    </source>
</evidence>
<dbReference type="EC" id="3.4.21.92" evidence="5 6 9"/>
<dbReference type="EMBL" id="Z50853">
    <property type="protein sequence ID" value="CAA90705.1"/>
    <property type="molecule type" value="mRNA"/>
</dbReference>
<dbReference type="EMBL" id="AK311973">
    <property type="protein sequence ID" value="BAG34912.1"/>
    <property type="molecule type" value="mRNA"/>
</dbReference>
<dbReference type="EMBL" id="BC002956">
    <property type="protein sequence ID" value="AAH02956.1"/>
    <property type="molecule type" value="mRNA"/>
</dbReference>
<dbReference type="CCDS" id="CCDS12162.1"/>
<dbReference type="PIR" id="S68421">
    <property type="entry name" value="S68421"/>
</dbReference>
<dbReference type="RefSeq" id="NP_006003.1">
    <property type="nucleotide sequence ID" value="NM_006012.4"/>
</dbReference>
<dbReference type="PDB" id="1TG6">
    <property type="method" value="X-ray"/>
    <property type="resolution" value="2.10 A"/>
    <property type="chains" value="A/B/C/D/E/F/G=1-277"/>
</dbReference>
<dbReference type="PDB" id="6BBA">
    <property type="method" value="X-ray"/>
    <property type="resolution" value="2.80 A"/>
    <property type="chains" value="A/B/C/D/E/F/G=58-277"/>
</dbReference>
<dbReference type="PDB" id="6DL7">
    <property type="method" value="X-ray"/>
    <property type="resolution" value="2.00 A"/>
    <property type="chains" value="A/B/C/D/E/F/G=58-277"/>
</dbReference>
<dbReference type="PDB" id="6H23">
    <property type="method" value="X-ray"/>
    <property type="resolution" value="3.09 A"/>
    <property type="chains" value="A/B/C/D/E/F/G/H/I/J/K/L/M/N=57-277"/>
</dbReference>
<dbReference type="PDB" id="7UVM">
    <property type="method" value="X-ray"/>
    <property type="resolution" value="2.19 A"/>
    <property type="chains" value="A/B/C/D/E/F/G=58-277"/>
</dbReference>
<dbReference type="PDB" id="7UVN">
    <property type="method" value="X-ray"/>
    <property type="resolution" value="3.11 A"/>
    <property type="chains" value="A/B/C/D/E/F/G=58-277"/>
</dbReference>
<dbReference type="PDB" id="7UVR">
    <property type="method" value="X-ray"/>
    <property type="resolution" value="2.86 A"/>
    <property type="chains" value="A/B/C/D/E/F/G=58-277"/>
</dbReference>
<dbReference type="PDB" id="7UVU">
    <property type="method" value="X-ray"/>
    <property type="resolution" value="3.24 A"/>
    <property type="chains" value="A/B/C/D/E/F/G=58-277"/>
</dbReference>
<dbReference type="PDB" id="7UW0">
    <property type="method" value="X-ray"/>
    <property type="resolution" value="2.80 A"/>
    <property type="chains" value="A/B/C/D/E/F/G=58-277"/>
</dbReference>
<dbReference type="PDB" id="7VP9">
    <property type="method" value="X-ray"/>
    <property type="resolution" value="2.55 A"/>
    <property type="chains" value="A/B/C/D/E/F/G/H/I/J/K/L/M/N=57-277"/>
</dbReference>
<dbReference type="PDB" id="7WH5">
    <property type="method" value="X-ray"/>
    <property type="resolution" value="2.13 A"/>
    <property type="chains" value="A/B/C/D/E/F/G/H/I/J/K/L/M/N=57-277"/>
</dbReference>
<dbReference type="PDB" id="8HGK">
    <property type="method" value="X-ray"/>
    <property type="resolution" value="1.90 A"/>
    <property type="chains" value="A/B/C/D/E/F/G/H/I/J/K/L/M/N=57-277"/>
</dbReference>
<dbReference type="PDB" id="8I7X">
    <property type="method" value="X-ray"/>
    <property type="resolution" value="1.99 A"/>
    <property type="chains" value="A/B/C/D/E/F/G/H/I/J/K/L/M/N=57-277"/>
</dbReference>
<dbReference type="PDB" id="8W7C">
    <property type="method" value="X-ray"/>
    <property type="resolution" value="3.00 A"/>
    <property type="chains" value="A/B/C/D/E/F/G=58-277"/>
</dbReference>
<dbReference type="PDB" id="8W7E">
    <property type="method" value="X-ray"/>
    <property type="resolution" value="2.80 A"/>
    <property type="chains" value="A/B/C/D/E/F/G/H/I/J/K/L/M/N=58-277"/>
</dbReference>
<dbReference type="PDB" id="8WUZ">
    <property type="method" value="X-ray"/>
    <property type="resolution" value="2.90 A"/>
    <property type="chains" value="A/B/C/D/E/F/G=58-277"/>
</dbReference>
<dbReference type="PDB" id="8YLB">
    <property type="method" value="X-ray"/>
    <property type="resolution" value="2.15 A"/>
    <property type="chains" value="A/B/C/D/E/F/G/H/I/J/K/L/M/N=58-277"/>
</dbReference>
<dbReference type="PDBsum" id="1TG6"/>
<dbReference type="PDBsum" id="6BBA"/>
<dbReference type="PDBsum" id="6DL7"/>
<dbReference type="PDBsum" id="6H23"/>
<dbReference type="PDBsum" id="7UVM"/>
<dbReference type="PDBsum" id="7UVN"/>
<dbReference type="PDBsum" id="7UVR"/>
<dbReference type="PDBsum" id="7UVU"/>
<dbReference type="PDBsum" id="7UW0"/>
<dbReference type="PDBsum" id="7VP9"/>
<dbReference type="PDBsum" id="7WH5"/>
<dbReference type="PDBsum" id="8HGK"/>
<dbReference type="PDBsum" id="8I7X"/>
<dbReference type="PDBsum" id="8W7C"/>
<dbReference type="PDBsum" id="8W7E"/>
<dbReference type="PDBsum" id="8WUZ"/>
<dbReference type="PDBsum" id="8YLB"/>
<dbReference type="SMR" id="Q16740"/>
<dbReference type="BioGRID" id="113835">
    <property type="interactions" value="591"/>
</dbReference>
<dbReference type="ComplexPortal" id="CPX-6177">
    <property type="entry name" value="Mitochondrial endopeptidase ClpXP complex"/>
</dbReference>
<dbReference type="CORUM" id="Q16740"/>
<dbReference type="DIP" id="DIP-50384N"/>
<dbReference type="FunCoup" id="Q16740">
    <property type="interactions" value="1747"/>
</dbReference>
<dbReference type="IntAct" id="Q16740">
    <property type="interactions" value="122"/>
</dbReference>
<dbReference type="MINT" id="Q16740"/>
<dbReference type="STRING" id="9606.ENSP00000245816"/>
<dbReference type="BindingDB" id="Q16740"/>
<dbReference type="ChEMBL" id="CHEMBL4523305"/>
<dbReference type="DrugBank" id="DB04464">
    <property type="generic name" value="N-Formylmethionine"/>
</dbReference>
<dbReference type="GuidetoPHARMACOLOGY" id="3273"/>
<dbReference type="MEROPS" id="S14.003"/>
<dbReference type="iPTMnet" id="Q16740"/>
<dbReference type="MetOSite" id="Q16740"/>
<dbReference type="PhosphoSitePlus" id="Q16740"/>
<dbReference type="SwissPalm" id="Q16740"/>
<dbReference type="BioMuta" id="CLPP"/>
<dbReference type="DMDM" id="3023512"/>
<dbReference type="jPOST" id="Q16740"/>
<dbReference type="MassIVE" id="Q16740"/>
<dbReference type="PaxDb" id="9606-ENSP00000245816"/>
<dbReference type="PeptideAtlas" id="Q16740"/>
<dbReference type="ProteomicsDB" id="61051"/>
<dbReference type="Pumba" id="Q16740"/>
<dbReference type="TopDownProteomics" id="Q16740"/>
<dbReference type="Antibodypedia" id="1703">
    <property type="antibodies" value="379 antibodies from 34 providers"/>
</dbReference>
<dbReference type="DNASU" id="8192"/>
<dbReference type="Ensembl" id="ENST00000245816.11">
    <property type="protein sequence ID" value="ENSP00000245816.3"/>
    <property type="gene ID" value="ENSG00000125656.12"/>
</dbReference>
<dbReference type="Ensembl" id="ENST00000715787.1">
    <property type="protein sequence ID" value="ENSP00000520519.1"/>
    <property type="gene ID" value="ENSG00000125656.12"/>
</dbReference>
<dbReference type="GeneID" id="8192"/>
<dbReference type="KEGG" id="hsa:8192"/>
<dbReference type="MANE-Select" id="ENST00000245816.11">
    <property type="protein sequence ID" value="ENSP00000245816.3"/>
    <property type="RefSeq nucleotide sequence ID" value="NM_006012.4"/>
    <property type="RefSeq protein sequence ID" value="NP_006003.1"/>
</dbReference>
<dbReference type="UCSC" id="uc002mem.2">
    <property type="organism name" value="human"/>
</dbReference>
<dbReference type="AGR" id="HGNC:2084"/>
<dbReference type="CTD" id="8192"/>
<dbReference type="DisGeNET" id="8192"/>
<dbReference type="GeneCards" id="CLPP"/>
<dbReference type="GeneReviews" id="CLPP"/>
<dbReference type="HGNC" id="HGNC:2084">
    <property type="gene designation" value="CLPP"/>
</dbReference>
<dbReference type="HPA" id="ENSG00000125656">
    <property type="expression patterns" value="Low tissue specificity"/>
</dbReference>
<dbReference type="MalaCards" id="CLPP"/>
<dbReference type="MIM" id="601119">
    <property type="type" value="gene"/>
</dbReference>
<dbReference type="MIM" id="614129">
    <property type="type" value="phenotype"/>
</dbReference>
<dbReference type="neXtProt" id="NX_Q16740"/>
<dbReference type="OpenTargets" id="ENSG00000125656"/>
<dbReference type="Orphanet" id="642945">
    <property type="disease" value="Perrault syndrome type 1"/>
</dbReference>
<dbReference type="Orphanet" id="642976">
    <property type="disease" value="Perrault syndrome type 2"/>
</dbReference>
<dbReference type="PharmGKB" id="PA26610"/>
<dbReference type="VEuPathDB" id="HostDB:ENSG00000125656"/>
<dbReference type="eggNOG" id="KOG0840">
    <property type="taxonomic scope" value="Eukaryota"/>
</dbReference>
<dbReference type="GeneTree" id="ENSGT00390000005830"/>
<dbReference type="InParanoid" id="Q16740"/>
<dbReference type="OMA" id="RDYWMKA"/>
<dbReference type="OrthoDB" id="2017408at2759"/>
<dbReference type="PAN-GO" id="Q16740">
    <property type="GO annotations" value="5 GO annotations based on evolutionary models"/>
</dbReference>
<dbReference type="PhylomeDB" id="Q16740"/>
<dbReference type="TreeFam" id="TF105002"/>
<dbReference type="BRENDA" id="3.4.21.92">
    <property type="organism ID" value="2681"/>
</dbReference>
<dbReference type="PathwayCommons" id="Q16740"/>
<dbReference type="Reactome" id="R-HSA-9837999">
    <property type="pathway name" value="Mitochondrial protein degradation"/>
</dbReference>
<dbReference type="SignaLink" id="Q16740"/>
<dbReference type="BioGRID-ORCS" id="8192">
    <property type="hits" value="42 hits in 1153 CRISPR screens"/>
</dbReference>
<dbReference type="CD-CODE" id="91857CE7">
    <property type="entry name" value="Nucleolus"/>
</dbReference>
<dbReference type="CD-CODE" id="DEE660B4">
    <property type="entry name" value="Stress granule"/>
</dbReference>
<dbReference type="ChiTaRS" id="CLPP">
    <property type="organism name" value="human"/>
</dbReference>
<dbReference type="EvolutionaryTrace" id="Q16740"/>
<dbReference type="GeneWiki" id="CLPP"/>
<dbReference type="GenomeRNAi" id="8192"/>
<dbReference type="Pharos" id="Q16740">
    <property type="development level" value="Tchem"/>
</dbReference>
<dbReference type="PRO" id="PR:Q16740"/>
<dbReference type="Proteomes" id="UP000005640">
    <property type="component" value="Chromosome 19"/>
</dbReference>
<dbReference type="RNAct" id="Q16740">
    <property type="molecule type" value="protein"/>
</dbReference>
<dbReference type="Bgee" id="ENSG00000125656">
    <property type="expression patterns" value="Expressed in hindlimb stylopod muscle and 206 other cell types or tissues"/>
</dbReference>
<dbReference type="ExpressionAtlas" id="Q16740">
    <property type="expression patterns" value="baseline and differential"/>
</dbReference>
<dbReference type="GO" id="GO:0009368">
    <property type="term" value="C:endopeptidase Clp complex"/>
    <property type="evidence" value="ECO:0000314"/>
    <property type="project" value="UniProtKB"/>
</dbReference>
<dbReference type="GO" id="GO:0005759">
    <property type="term" value="C:mitochondrial matrix"/>
    <property type="evidence" value="ECO:0000314"/>
    <property type="project" value="UniProtKB"/>
</dbReference>
<dbReference type="GO" id="GO:0005739">
    <property type="term" value="C:mitochondrion"/>
    <property type="evidence" value="ECO:0000314"/>
    <property type="project" value="UniProtKB"/>
</dbReference>
<dbReference type="GO" id="GO:0004176">
    <property type="term" value="F:ATP-dependent peptidase activity"/>
    <property type="evidence" value="ECO:0000318"/>
    <property type="project" value="GO_Central"/>
</dbReference>
<dbReference type="GO" id="GO:0051117">
    <property type="term" value="F:ATPase binding"/>
    <property type="evidence" value="ECO:0000318"/>
    <property type="project" value="GO_Central"/>
</dbReference>
<dbReference type="GO" id="GO:0004175">
    <property type="term" value="F:endopeptidase activity"/>
    <property type="evidence" value="ECO:0000314"/>
    <property type="project" value="UniProtKB"/>
</dbReference>
<dbReference type="GO" id="GO:0042802">
    <property type="term" value="F:identical protein binding"/>
    <property type="evidence" value="ECO:0007669"/>
    <property type="project" value="Ensembl"/>
</dbReference>
<dbReference type="GO" id="GO:0008233">
    <property type="term" value="F:peptidase activity"/>
    <property type="evidence" value="ECO:0000304"/>
    <property type="project" value="ProtInc"/>
</dbReference>
<dbReference type="GO" id="GO:0004252">
    <property type="term" value="F:serine-type endopeptidase activity"/>
    <property type="evidence" value="ECO:0000314"/>
    <property type="project" value="UniProtKB"/>
</dbReference>
<dbReference type="GO" id="GO:0033619">
    <property type="term" value="P:membrane protein proteolysis"/>
    <property type="evidence" value="ECO:0000314"/>
    <property type="project" value="UniProtKB"/>
</dbReference>
<dbReference type="GO" id="GO:0035694">
    <property type="term" value="P:mitochondrial protein catabolic process"/>
    <property type="evidence" value="ECO:0000304"/>
    <property type="project" value="Reactome"/>
</dbReference>
<dbReference type="GO" id="GO:0006515">
    <property type="term" value="P:protein quality control for misfolded or incompletely synthesized proteins"/>
    <property type="evidence" value="ECO:0000318"/>
    <property type="project" value="GO_Central"/>
</dbReference>
<dbReference type="GO" id="GO:0006508">
    <property type="term" value="P:proteolysis"/>
    <property type="evidence" value="ECO:0000314"/>
    <property type="project" value="ComplexPortal"/>
</dbReference>
<dbReference type="GO" id="GO:0051603">
    <property type="term" value="P:proteolysis involved in protein catabolic process"/>
    <property type="evidence" value="ECO:0000314"/>
    <property type="project" value="UniProtKB"/>
</dbReference>
<dbReference type="CDD" id="cd07017">
    <property type="entry name" value="S14_ClpP_2"/>
    <property type="match status" value="1"/>
</dbReference>
<dbReference type="FunFam" id="3.90.226.10:FF:000001">
    <property type="entry name" value="ATP-dependent Clp protease proteolytic subunit"/>
    <property type="match status" value="1"/>
</dbReference>
<dbReference type="Gene3D" id="3.90.226.10">
    <property type="entry name" value="2-enoyl-CoA Hydratase, Chain A, domain 1"/>
    <property type="match status" value="1"/>
</dbReference>
<dbReference type="HAMAP" id="MF_00444">
    <property type="entry name" value="ClpP"/>
    <property type="match status" value="1"/>
</dbReference>
<dbReference type="InterPro" id="IPR001907">
    <property type="entry name" value="ClpP"/>
</dbReference>
<dbReference type="InterPro" id="IPR029045">
    <property type="entry name" value="ClpP/crotonase-like_dom_sf"/>
</dbReference>
<dbReference type="InterPro" id="IPR023562">
    <property type="entry name" value="ClpP/TepA"/>
</dbReference>
<dbReference type="InterPro" id="IPR033135">
    <property type="entry name" value="ClpP_His_AS"/>
</dbReference>
<dbReference type="InterPro" id="IPR018215">
    <property type="entry name" value="ClpP_Ser_AS"/>
</dbReference>
<dbReference type="NCBIfam" id="NF001368">
    <property type="entry name" value="PRK00277.1"/>
    <property type="match status" value="1"/>
</dbReference>
<dbReference type="NCBIfam" id="NF009205">
    <property type="entry name" value="PRK12553.1"/>
    <property type="match status" value="1"/>
</dbReference>
<dbReference type="PANTHER" id="PTHR10381">
    <property type="entry name" value="ATP-DEPENDENT CLP PROTEASE PROTEOLYTIC SUBUNIT"/>
    <property type="match status" value="1"/>
</dbReference>
<dbReference type="PANTHER" id="PTHR10381:SF11">
    <property type="entry name" value="ATP-DEPENDENT CLP PROTEASE PROTEOLYTIC SUBUNIT, MITOCHONDRIAL"/>
    <property type="match status" value="1"/>
</dbReference>
<dbReference type="Pfam" id="PF00574">
    <property type="entry name" value="CLP_protease"/>
    <property type="match status" value="1"/>
</dbReference>
<dbReference type="PRINTS" id="PR00127">
    <property type="entry name" value="CLPPROTEASEP"/>
</dbReference>
<dbReference type="SUPFAM" id="SSF52096">
    <property type="entry name" value="ClpP/crotonase"/>
    <property type="match status" value="1"/>
</dbReference>
<dbReference type="PROSITE" id="PS00382">
    <property type="entry name" value="CLP_PROTEASE_HIS"/>
    <property type="match status" value="1"/>
</dbReference>
<dbReference type="PROSITE" id="PS00381">
    <property type="entry name" value="CLP_PROTEASE_SER"/>
    <property type="match status" value="1"/>
</dbReference>
<name>CLPP_HUMAN</name>
<protein>
    <recommendedName>
        <fullName>ATP-dependent Clp protease proteolytic subunit, mitochondrial</fullName>
        <ecNumber evidence="5 6 9">3.4.21.92</ecNumber>
    </recommendedName>
    <alternativeName>
        <fullName evidence="14">Caseinolytic mitochondrial matrix peptidase proteolytic subunit</fullName>
    </alternativeName>
    <alternativeName>
        <fullName>Endopeptidase Clp</fullName>
    </alternativeName>
</protein>
<keyword id="KW-0002">3D-structure</keyword>
<keyword id="KW-0007">Acetylation</keyword>
<keyword id="KW-0209">Deafness</keyword>
<keyword id="KW-0903">Direct protein sequencing</keyword>
<keyword id="KW-0225">Disease variant</keyword>
<keyword id="KW-0378">Hydrolase</keyword>
<keyword id="KW-0496">Mitochondrion</keyword>
<keyword id="KW-0645">Protease</keyword>
<keyword id="KW-1267">Proteomics identification</keyword>
<keyword id="KW-1185">Reference proteome</keyword>
<keyword id="KW-0720">Serine protease</keyword>
<keyword id="KW-0809">Transit peptide</keyword>
<accession>Q16740</accession>
<accession>B2R4W5</accession>
<sequence length="277" mass="30180">MWPGILVGGARVASCRYPALGPRLAAHFPAQRPPQRTLQNGLALQRCLHATATRALPLIPIVVEQTGRGERAYDIYSRLLRERIVCVMGPIDDSVASLVIAQLLFLQSESNKKPIHMYINSPGGVVTAGLAIYDTMQYILNPICTWCVGQAASMGSLLLAAGTPGMRHSLPNSRIMIHQPSGGARGQATDIAIQAEEIMKLKKQLYNIYAKHTKQSLQVIESAMERDRYMSPMEAQEFGILDKVLVHPPQDGEDEPTLVQKEPVEAAPAAEPVPAST</sequence>
<comment type="function">
    <text evidence="5 6 9">Protease component of the ClpXP complex that cleaves peptides and various proteins in an ATP-dependent process. Has low peptidase activity in the absence of CLPX. The ClpXP complex can degrade CSN1S1, CSN2 and CSN3, as well as synthetic peptides (in vitro) and may be responsible for a fairly general and central housekeeping function rather than for the degradation of specific substrates (PubMed:11923310, PubMed:15522782). Cleaves PINK1 in the mitochondrion (PubMed:22354088).</text>
</comment>
<comment type="catalytic activity">
    <reaction evidence="5 6 9">
        <text>Hydrolysis of proteins to small peptides in the presence of ATP and magnesium. alpha-casein is the usual test substrate. In the absence of ATP, only oligopeptides shorter than five residues are hydrolyzed (such as succinyl-Leu-Tyr-|-NHMec, and Leu-Tyr-Leu-|-Tyr-Trp, in which cleavage of the -Tyr-|-Leu- and -Tyr-|-Trp bonds also occurs).</text>
        <dbReference type="EC" id="3.4.21.92"/>
    </reaction>
</comment>
<comment type="subunit">
    <text evidence="4 5 6 7">Fourteen CLPP subunits assemble into 2 heptameric rings which stack back to back to give a disk-like structure with a central cavity. Component of the ClpXP complex formed by the assembly of two CLPP heptameric rings with two CLPX hexameric rings, giving rise to a symmetrical structure with two central CLPP rings flanked by a CLPX ring at either end of the complex.</text>
</comment>
<comment type="interaction">
    <interactant intactId="EBI-1056029">
        <id>Q16740</id>
    </interactant>
    <interactant intactId="EBI-11096309">
        <id>Q9NYB9-2</id>
        <label>ABI2</label>
    </interactant>
    <organismsDiffer>false</organismsDiffer>
    <experiments>3</experiments>
</comment>
<comment type="interaction">
    <interactant intactId="EBI-1056029">
        <id>Q16740</id>
    </interactant>
    <interactant intactId="EBI-77613">
        <id>P05067</id>
        <label>APP</label>
    </interactant>
    <organismsDiffer>false</organismsDiffer>
    <experiments>3</experiments>
</comment>
<comment type="interaction">
    <interactant intactId="EBI-1056029">
        <id>Q16740</id>
    </interactant>
    <interactant intactId="EBI-946046">
        <id>P54252</id>
        <label>ATXN3</label>
    </interactant>
    <organismsDiffer>false</organismsDiffer>
    <experiments>3</experiments>
</comment>
<comment type="interaction">
    <interactant intactId="EBI-1056029">
        <id>Q16740</id>
    </interactant>
    <interactant intactId="EBI-725606">
        <id>Q9NWQ9</id>
        <label>C14orf119</label>
    </interactant>
    <organismsDiffer>false</organismsDiffer>
    <experiments>3</experiments>
</comment>
<comment type="interaction">
    <interactant intactId="EBI-1056029">
        <id>Q16740</id>
    </interactant>
    <interactant intactId="EBI-10968534">
        <id>P50570-2</id>
        <label>DNM2</label>
    </interactant>
    <organismsDiffer>false</organismsDiffer>
    <experiments>3</experiments>
</comment>
<comment type="interaction">
    <interactant intactId="EBI-1056029">
        <id>Q16740</id>
    </interactant>
    <interactant intactId="EBI-740376">
        <id>Q86UW9</id>
        <label>DTX2</label>
    </interactant>
    <organismsDiffer>false</organismsDiffer>
    <experiments>5</experiments>
</comment>
<comment type="interaction">
    <interactant intactId="EBI-1056029">
        <id>Q16740</id>
    </interactant>
    <interactant intactId="EBI-536772">
        <id>Q12805</id>
        <label>EFEMP1</label>
    </interactant>
    <organismsDiffer>false</organismsDiffer>
    <experiments>3</experiments>
</comment>
<comment type="interaction">
    <interactant intactId="EBI-1056029">
        <id>Q16740</id>
    </interactant>
    <interactant intactId="EBI-743414">
        <id>O95967</id>
        <label>EFEMP2</label>
    </interactant>
    <organismsDiffer>false</organismsDiffer>
    <experiments>3</experiments>
</comment>
<comment type="interaction">
    <interactant intactId="EBI-1056029">
        <id>Q16740</id>
    </interactant>
    <interactant intactId="EBI-11110431">
        <id>Q8TB36</id>
        <label>GDAP1</label>
    </interactant>
    <organismsDiffer>false</organismsDiffer>
    <experiments>3</experiments>
</comment>
<comment type="interaction">
    <interactant intactId="EBI-1056029">
        <id>Q16740</id>
    </interactant>
    <interactant intactId="EBI-747754">
        <id>P28799</id>
        <label>GRN</label>
    </interactant>
    <organismsDiffer>false</organismsDiffer>
    <experiments>3</experiments>
</comment>
<comment type="interaction">
    <interactant intactId="EBI-1056029">
        <id>Q16740</id>
    </interactant>
    <interactant intactId="EBI-466029">
        <id>P42858</id>
        <label>HTT</label>
    </interactant>
    <organismsDiffer>false</organismsDiffer>
    <experiments>6</experiments>
</comment>
<comment type="interaction">
    <interactant intactId="EBI-1056029">
        <id>Q16740</id>
    </interactant>
    <interactant intactId="EBI-1055254">
        <id>Q8WXH2</id>
        <label>JPH3</label>
    </interactant>
    <organismsDiffer>false</organismsDiffer>
    <experiments>3</experiments>
</comment>
<comment type="interaction">
    <interactant intactId="EBI-1056029">
        <id>Q16740</id>
    </interactant>
    <interactant intactId="EBI-591778">
        <id>P61970</id>
        <label>NUTF2</label>
    </interactant>
    <organismsDiffer>false</organismsDiffer>
    <experiments>3</experiments>
</comment>
<comment type="interaction">
    <interactant intactId="EBI-1056029">
        <id>Q16740</id>
    </interactant>
    <interactant intactId="EBI-10181968">
        <id>Q7Z4N8</id>
        <label>P4HA3</label>
    </interactant>
    <organismsDiffer>false</organismsDiffer>
    <experiments>3</experiments>
</comment>
<comment type="interaction">
    <interactant intactId="EBI-1056029">
        <id>Q16740</id>
    </interactant>
    <interactant intactId="EBI-769257">
        <id>Q9NRQ2</id>
        <label>PLSCR4</label>
    </interactant>
    <organismsDiffer>false</organismsDiffer>
    <experiments>3</experiments>
</comment>
<comment type="interaction">
    <interactant intactId="EBI-1056029">
        <id>Q16740</id>
    </interactant>
    <interactant intactId="EBI-712311">
        <id>P67775</id>
        <label>PPP2CA</label>
    </interactant>
    <organismsDiffer>false</organismsDiffer>
    <experiments>3</experiments>
</comment>
<comment type="interaction">
    <interactant intactId="EBI-1056029">
        <id>Q16740</id>
    </interactant>
    <interactant intactId="EBI-372273">
        <id>P20618</id>
        <label>PSMB1</label>
    </interactant>
    <organismsDiffer>false</organismsDiffer>
    <experiments>3</experiments>
</comment>
<comment type="interaction">
    <interactant intactId="EBI-1056029">
        <id>Q16740</id>
    </interactant>
    <interactant intactId="EBI-740343">
        <id>Q93062-3</id>
        <label>RBPMS</label>
    </interactant>
    <organismsDiffer>false</organismsDiffer>
    <experiments>3</experiments>
</comment>
<comment type="interaction">
    <interactant intactId="EBI-1056029">
        <id>Q16740</id>
    </interactant>
    <interactant intactId="EBI-985879">
        <id>P37840</id>
        <label>SNCA</label>
    </interactant>
    <organismsDiffer>false</organismsDiffer>
    <experiments>3</experiments>
</comment>
<comment type="interaction">
    <interactant intactId="EBI-1056029">
        <id>Q16740</id>
    </interactant>
    <interactant intactId="EBI-372899">
        <id>Q13148</id>
        <label>TARDBP</label>
    </interactant>
    <organismsDiffer>false</organismsDiffer>
    <experiments>3</experiments>
</comment>
<comment type="interaction">
    <interactant intactId="EBI-1056029">
        <id>Q16740</id>
    </interactant>
    <interactant intactId="EBI-1042571">
        <id>Q9Y5L0</id>
        <label>TNPO3</label>
    </interactant>
    <organismsDiffer>false</organismsDiffer>
    <experiments>3</experiments>
</comment>
<comment type="interaction">
    <interactant intactId="EBI-1056029">
        <id>Q16740</id>
    </interactant>
    <interactant intactId="EBI-720609">
        <id>O76024</id>
        <label>WFS1</label>
    </interactant>
    <organismsDiffer>false</organismsDiffer>
    <experiments>3</experiments>
</comment>
<comment type="interaction">
    <interactant intactId="EBI-25815820">
        <id>PRO_0000005516</id>
    </interactant>
    <interactant intactId="EBI-1052667">
        <id>O76031</id>
        <label>CLPX</label>
    </interactant>
    <organismsDiffer>false</organismsDiffer>
    <experiments>2</experiments>
</comment>
<comment type="subcellular location">
    <subcellularLocation>
        <location evidence="4 9">Mitochondrion matrix</location>
    </subcellularLocation>
</comment>
<comment type="tissue specificity">
    <text evidence="4 12">Detected in liver (at protein level). Predominantly expressed in skeletal muscle. Intermediate levels in heart, liver and pancreas. Low in brain, placenta, lung and kidney.</text>
</comment>
<comment type="disease" evidence="10 11">
    <disease id="DI-03818">
        <name>Perrault syndrome 3</name>
        <acronym>PRLTS3</acronym>
        <description>An autosomal recessive, sex-influenced disorder characterized by sensorineural deafness in both males and females, and ovarian dysgenesis in females. Affected females have primary amenorrhea, streak gonads, and infertility, whereas affected males show normal pubertal development and are fertile. A spectrum of additional clinical features, including cerebellar ataxia, learning disability, and peripheral neuropathy, have been described in some PRLTS3 affected individuals.</description>
        <dbReference type="MIM" id="614129"/>
    </disease>
    <text>The disease is caused by variants affecting the gene represented in this entry.</text>
</comment>
<comment type="similarity">
    <text evidence="13">Belongs to the peptidase S14 family.</text>
</comment>
<proteinExistence type="evidence at protein level"/>
<feature type="transit peptide" description="Mitochondrion" evidence="8 16">
    <location>
        <begin position="1"/>
        <end position="56"/>
    </location>
</feature>
<feature type="chain" id="PRO_0000005516" description="ATP-dependent Clp protease proteolytic subunit, mitochondrial">
    <location>
        <begin position="57"/>
        <end position="277"/>
    </location>
</feature>
<feature type="region of interest" description="Disordered" evidence="3">
    <location>
        <begin position="246"/>
        <end position="277"/>
    </location>
</feature>
<feature type="compositionally biased region" description="Low complexity" evidence="3">
    <location>
        <begin position="265"/>
        <end position="277"/>
    </location>
</feature>
<feature type="active site" description="Nucleophile" evidence="5">
    <location>
        <position position="153"/>
    </location>
</feature>
<feature type="active site" evidence="1">
    <location>
        <position position="178"/>
    </location>
</feature>
<feature type="modified residue" description="N6-succinyllysine" evidence="2">
    <location>
        <position position="200"/>
    </location>
</feature>
<feature type="modified residue" description="N6-acetyllysine" evidence="15">
    <location>
        <position position="211"/>
    </location>
</feature>
<feature type="sequence variant" id="VAR_070092" description="In PRLTS3; dbSNP:rs398123033." evidence="10">
    <original>T</original>
    <variation>P</variation>
    <location>
        <position position="145"/>
    </location>
</feature>
<feature type="sequence variant" id="VAR_070093" description="In PRLTS3; dbSNP:rs398123034." evidence="10">
    <original>C</original>
    <variation>S</variation>
    <location>
        <position position="147"/>
    </location>
</feature>
<feature type="sequence variant" id="VAR_074160" description="In PRLTS3." evidence="11">
    <original>Y</original>
    <variation>D</variation>
    <location>
        <position position="229"/>
    </location>
</feature>
<feature type="mutagenesis site" description="Abolishes protease activity." evidence="6">
    <location>
        <begin position="58"/>
        <end position="61"/>
    </location>
</feature>
<feature type="mutagenesis site" description="Abolishes protease activity." evidence="5">
    <original>S</original>
    <variation>A</variation>
    <variation>C</variation>
    <location>
        <position position="153"/>
    </location>
</feature>
<feature type="sequence conflict" description="In Ref. 2; BAG34912." evidence="13" ref="2">
    <original>N</original>
    <variation>S</variation>
    <location>
        <position position="111"/>
    </location>
</feature>
<feature type="strand" evidence="19">
    <location>
        <begin position="61"/>
        <end position="66"/>
    </location>
</feature>
<feature type="strand" evidence="19">
    <location>
        <begin position="69"/>
        <end position="74"/>
    </location>
</feature>
<feature type="helix" evidence="19">
    <location>
        <begin position="75"/>
        <end position="81"/>
    </location>
</feature>
<feature type="strand" evidence="19">
    <location>
        <begin position="84"/>
        <end position="89"/>
    </location>
</feature>
<feature type="helix" evidence="19">
    <location>
        <begin position="93"/>
        <end position="109"/>
    </location>
</feature>
<feature type="strand" evidence="19">
    <location>
        <begin position="111"/>
        <end position="113"/>
    </location>
</feature>
<feature type="strand" evidence="19">
    <location>
        <begin position="115"/>
        <end position="121"/>
    </location>
</feature>
<feature type="helix" evidence="19">
    <location>
        <begin position="126"/>
        <end position="138"/>
    </location>
</feature>
<feature type="strand" evidence="18">
    <location>
        <begin position="139"/>
        <end position="141"/>
    </location>
</feature>
<feature type="strand" evidence="19">
    <location>
        <begin position="143"/>
        <end position="152"/>
    </location>
</feature>
<feature type="helix" evidence="19">
    <location>
        <begin position="154"/>
        <end position="160"/>
    </location>
</feature>
<feature type="strand" evidence="19">
    <location>
        <begin position="167"/>
        <end position="169"/>
    </location>
</feature>
<feature type="strand" evidence="19">
    <location>
        <begin position="174"/>
        <end position="176"/>
    </location>
</feature>
<feature type="helix" evidence="19">
    <location>
        <begin position="195"/>
        <end position="213"/>
    </location>
</feature>
<feature type="helix" evidence="19">
    <location>
        <begin position="217"/>
        <end position="225"/>
    </location>
</feature>
<feature type="strand" evidence="17">
    <location>
        <begin position="228"/>
        <end position="230"/>
    </location>
</feature>
<feature type="helix" evidence="19">
    <location>
        <begin position="232"/>
        <end position="237"/>
    </location>
</feature>
<feature type="strand" evidence="19">
    <location>
        <begin position="242"/>
        <end position="244"/>
    </location>
</feature>
<reference key="1">
    <citation type="journal article" date="1995" name="FEBS Lett.">
        <title>Human ClpP protease: cDNA sequence, tissue-specific expression and chromosomal assignment of the gene.</title>
        <authorList>
            <person name="Bross P."/>
            <person name="Andresen B.S."/>
            <person name="Knudsen I."/>
            <person name="Kruse T.A."/>
            <person name="Gregersen N."/>
        </authorList>
    </citation>
    <scope>NUCLEOTIDE SEQUENCE [MRNA]</scope>
    <scope>TISSUE SPECIFICITY</scope>
    <source>
        <tissue>Placenta</tissue>
    </source>
</reference>
<reference key="2">
    <citation type="journal article" date="2004" name="Nat. Genet.">
        <title>Complete sequencing and characterization of 21,243 full-length human cDNAs.</title>
        <authorList>
            <person name="Ota T."/>
            <person name="Suzuki Y."/>
            <person name="Nishikawa T."/>
            <person name="Otsuki T."/>
            <person name="Sugiyama T."/>
            <person name="Irie R."/>
            <person name="Wakamatsu A."/>
            <person name="Hayashi K."/>
            <person name="Sato H."/>
            <person name="Nagai K."/>
            <person name="Kimura K."/>
            <person name="Makita H."/>
            <person name="Sekine M."/>
            <person name="Obayashi M."/>
            <person name="Nishi T."/>
            <person name="Shibahara T."/>
            <person name="Tanaka T."/>
            <person name="Ishii S."/>
            <person name="Yamamoto J."/>
            <person name="Saito K."/>
            <person name="Kawai Y."/>
            <person name="Isono Y."/>
            <person name="Nakamura Y."/>
            <person name="Nagahari K."/>
            <person name="Murakami K."/>
            <person name="Yasuda T."/>
            <person name="Iwayanagi T."/>
            <person name="Wagatsuma M."/>
            <person name="Shiratori A."/>
            <person name="Sudo H."/>
            <person name="Hosoiri T."/>
            <person name="Kaku Y."/>
            <person name="Kodaira H."/>
            <person name="Kondo H."/>
            <person name="Sugawara M."/>
            <person name="Takahashi M."/>
            <person name="Kanda K."/>
            <person name="Yokoi T."/>
            <person name="Furuya T."/>
            <person name="Kikkawa E."/>
            <person name="Omura Y."/>
            <person name="Abe K."/>
            <person name="Kamihara K."/>
            <person name="Katsuta N."/>
            <person name="Sato K."/>
            <person name="Tanikawa M."/>
            <person name="Yamazaki M."/>
            <person name="Ninomiya K."/>
            <person name="Ishibashi T."/>
            <person name="Yamashita H."/>
            <person name="Murakawa K."/>
            <person name="Fujimori K."/>
            <person name="Tanai H."/>
            <person name="Kimata M."/>
            <person name="Watanabe M."/>
            <person name="Hiraoka S."/>
            <person name="Chiba Y."/>
            <person name="Ishida S."/>
            <person name="Ono Y."/>
            <person name="Takiguchi S."/>
            <person name="Watanabe S."/>
            <person name="Yosida M."/>
            <person name="Hotuta T."/>
            <person name="Kusano J."/>
            <person name="Kanehori K."/>
            <person name="Takahashi-Fujii A."/>
            <person name="Hara H."/>
            <person name="Tanase T.-O."/>
            <person name="Nomura Y."/>
            <person name="Togiya S."/>
            <person name="Komai F."/>
            <person name="Hara R."/>
            <person name="Takeuchi K."/>
            <person name="Arita M."/>
            <person name="Imose N."/>
            <person name="Musashino K."/>
            <person name="Yuuki H."/>
            <person name="Oshima A."/>
            <person name="Sasaki N."/>
            <person name="Aotsuka S."/>
            <person name="Yoshikawa Y."/>
            <person name="Matsunawa H."/>
            <person name="Ichihara T."/>
            <person name="Shiohata N."/>
            <person name="Sano S."/>
            <person name="Moriya S."/>
            <person name="Momiyama H."/>
            <person name="Satoh N."/>
            <person name="Takami S."/>
            <person name="Terashima Y."/>
            <person name="Suzuki O."/>
            <person name="Nakagawa S."/>
            <person name="Senoh A."/>
            <person name="Mizoguchi H."/>
            <person name="Goto Y."/>
            <person name="Shimizu F."/>
            <person name="Wakebe H."/>
            <person name="Hishigaki H."/>
            <person name="Watanabe T."/>
            <person name="Sugiyama A."/>
            <person name="Takemoto M."/>
            <person name="Kawakami B."/>
            <person name="Yamazaki M."/>
            <person name="Watanabe K."/>
            <person name="Kumagai A."/>
            <person name="Itakura S."/>
            <person name="Fukuzumi Y."/>
            <person name="Fujimori Y."/>
            <person name="Komiyama M."/>
            <person name="Tashiro H."/>
            <person name="Tanigami A."/>
            <person name="Fujiwara T."/>
            <person name="Ono T."/>
            <person name="Yamada K."/>
            <person name="Fujii Y."/>
            <person name="Ozaki K."/>
            <person name="Hirao M."/>
            <person name="Ohmori Y."/>
            <person name="Kawabata A."/>
            <person name="Hikiji T."/>
            <person name="Kobatake N."/>
            <person name="Inagaki H."/>
            <person name="Ikema Y."/>
            <person name="Okamoto S."/>
            <person name="Okitani R."/>
            <person name="Kawakami T."/>
            <person name="Noguchi S."/>
            <person name="Itoh T."/>
            <person name="Shigeta K."/>
            <person name="Senba T."/>
            <person name="Matsumura K."/>
            <person name="Nakajima Y."/>
            <person name="Mizuno T."/>
            <person name="Morinaga M."/>
            <person name="Sasaki M."/>
            <person name="Togashi T."/>
            <person name="Oyama M."/>
            <person name="Hata H."/>
            <person name="Watanabe M."/>
            <person name="Komatsu T."/>
            <person name="Mizushima-Sugano J."/>
            <person name="Satoh T."/>
            <person name="Shirai Y."/>
            <person name="Takahashi Y."/>
            <person name="Nakagawa K."/>
            <person name="Okumura K."/>
            <person name="Nagase T."/>
            <person name="Nomura N."/>
            <person name="Kikuchi H."/>
            <person name="Masuho Y."/>
            <person name="Yamashita R."/>
            <person name="Nakai K."/>
            <person name="Yada T."/>
            <person name="Nakamura Y."/>
            <person name="Ohara O."/>
            <person name="Isogai T."/>
            <person name="Sugano S."/>
        </authorList>
    </citation>
    <scope>NUCLEOTIDE SEQUENCE [LARGE SCALE MRNA]</scope>
    <source>
        <tissue>Skeletal muscle</tissue>
    </source>
</reference>
<reference key="3">
    <citation type="journal article" date="2004" name="Genome Res.">
        <title>The status, quality, and expansion of the NIH full-length cDNA project: the Mammalian Gene Collection (MGC).</title>
        <authorList>
            <consortium name="The MGC Project Team"/>
        </authorList>
    </citation>
    <scope>NUCLEOTIDE SEQUENCE [LARGE SCALE MRNA]</scope>
    <source>
        <tissue>Lymph</tissue>
    </source>
</reference>
<reference key="4">
    <citation type="journal article" date="2009" name="Proc. Natl. Acad. Sci. U.S.A.">
        <title>Global profiling of protease cleavage sites by chemoselective labeling of protein N-termini.</title>
        <authorList>
            <person name="Xu G."/>
            <person name="Shin S.B."/>
            <person name="Jaffrey S.R."/>
        </authorList>
    </citation>
    <scope>PROTEIN SEQUENCE [LARGE SCALE ANALYSIS] OF 57-69</scope>
    <source>
        <tissue>Leukemic T-cell</tissue>
    </source>
</reference>
<reference key="5">
    <citation type="journal article" date="1999" name="J. Mol. Biol.">
        <title>Mitochondrial localization and oligomeric structure of HClpP, the human homologue of E. coli ClpP.</title>
        <authorList>
            <person name="de Sagarra M.R."/>
            <person name="Mayo I."/>
            <person name="Marco S."/>
            <person name="Rodriguez-Vilarino S."/>
            <person name="Oliva J."/>
            <person name="Carrascosa J.L."/>
            <person name="Castano J.G."/>
        </authorList>
    </citation>
    <scope>SUBUNIT</scope>
    <scope>SUBCELLULAR LOCATION</scope>
    <scope>TISSUE SPECIFICITY</scope>
</reference>
<reference key="6">
    <citation type="journal article" date="2002" name="J. Biol. Chem.">
        <title>Functional proteolytic complexes of the human mitochondrial ATP-dependent protease, hClpXP.</title>
        <authorList>
            <person name="Kang S.G."/>
            <person name="Ortega J."/>
            <person name="Singh S.K."/>
            <person name="Wang N."/>
            <person name="Huang N.N."/>
            <person name="Steven A.C."/>
            <person name="Maurizi M.R."/>
        </authorList>
    </citation>
    <scope>FUNCTION</scope>
    <scope>CATALYTIC ACTIVITY</scope>
    <scope>SUBUNIT</scope>
    <scope>MUTAGENESIS OF SER-153</scope>
    <scope>ACTIVE SITE</scope>
    <scope>ELECTRON MICROSCOPY</scope>
</reference>
<reference key="7">
    <citation type="journal article" date="2005" name="J. Biol. Chem.">
        <title>Human mitochondrial ClpP is a stable heptamer that assembles into a tetradecamer in the presence of ClpX.</title>
        <authorList>
            <person name="Kang S.G."/>
            <person name="Dimitrova M.N."/>
            <person name="Ortega J."/>
            <person name="Ginsburg A."/>
            <person name="Maurizi M.R."/>
        </authorList>
    </citation>
    <scope>SUBUNIT</scope>
    <scope>IDENTIFICATION IN A COMPLEX WITH CLPX</scope>
</reference>
<reference key="8">
    <citation type="journal article" date="2009" name="Anal. Chem.">
        <title>Lys-N and trypsin cover complementary parts of the phosphoproteome in a refined SCX-based approach.</title>
        <authorList>
            <person name="Gauci S."/>
            <person name="Helbig A.O."/>
            <person name="Slijper M."/>
            <person name="Krijgsveld J."/>
            <person name="Heck A.J."/>
            <person name="Mohammed S."/>
        </authorList>
    </citation>
    <scope>IDENTIFICATION BY MASS SPECTROMETRY [LARGE SCALE ANALYSIS]</scope>
</reference>
<reference key="9">
    <citation type="journal article" date="2009" name="Science">
        <title>Lysine acetylation targets protein complexes and co-regulates major cellular functions.</title>
        <authorList>
            <person name="Choudhary C."/>
            <person name="Kumar C."/>
            <person name="Gnad F."/>
            <person name="Nielsen M.L."/>
            <person name="Rehman M."/>
            <person name="Walther T.C."/>
            <person name="Olsen J.V."/>
            <person name="Mann M."/>
        </authorList>
    </citation>
    <scope>ACETYLATION [LARGE SCALE ANALYSIS] AT LYS-211</scope>
    <scope>IDENTIFICATION BY MASS SPECTROMETRY [LARGE SCALE ANALYSIS]</scope>
</reference>
<reference key="10">
    <citation type="journal article" date="2011" name="BMC Syst. Biol.">
        <title>Initial characterization of the human central proteome.</title>
        <authorList>
            <person name="Burkard T.R."/>
            <person name="Planyavsky M."/>
            <person name="Kaupe I."/>
            <person name="Breitwieser F.P."/>
            <person name="Buerckstuemmer T."/>
            <person name="Bennett K.L."/>
            <person name="Superti-Furga G."/>
            <person name="Colinge J."/>
        </authorList>
    </citation>
    <scope>IDENTIFICATION BY MASS SPECTROMETRY [LARGE SCALE ANALYSIS]</scope>
</reference>
<reference key="11">
    <citation type="journal article" date="2012" name="EMBO Rep.">
        <title>Mitochondrial processing peptidase regulates PINK1 processing, import and Parkin recruitment.</title>
        <authorList>
            <person name="Greene A.W."/>
            <person name="Grenier K."/>
            <person name="Aguileta M.A."/>
            <person name="Muise S."/>
            <person name="Farazifard R."/>
            <person name="Haque M.E."/>
            <person name="McBride H.M."/>
            <person name="Park D.S."/>
            <person name="Fon E.A."/>
        </authorList>
    </citation>
    <scope>FUNCTION</scope>
    <scope>CATALYTIC ACTIVITY</scope>
    <scope>SUBCELLULAR LOCATION</scope>
</reference>
<reference key="12">
    <citation type="journal article" date="2014" name="J. Proteomics">
        <title>An enzyme assisted RP-RPLC approach for in-depth analysis of human liver phosphoproteome.</title>
        <authorList>
            <person name="Bian Y."/>
            <person name="Song C."/>
            <person name="Cheng K."/>
            <person name="Dong M."/>
            <person name="Wang F."/>
            <person name="Huang J."/>
            <person name="Sun D."/>
            <person name="Wang L."/>
            <person name="Ye M."/>
            <person name="Zou H."/>
        </authorList>
    </citation>
    <scope>IDENTIFICATION BY MASS SPECTROMETRY [LARGE SCALE ANALYSIS]</scope>
    <source>
        <tissue>Liver</tissue>
    </source>
</reference>
<reference key="13">
    <citation type="journal article" date="2015" name="Proteomics">
        <title>N-terminome analysis of the human mitochondrial proteome.</title>
        <authorList>
            <person name="Vaca Jacome A.S."/>
            <person name="Rabilloud T."/>
            <person name="Schaeffer-Reiss C."/>
            <person name="Rompais M."/>
            <person name="Ayoub D."/>
            <person name="Lane L."/>
            <person name="Bairoch A."/>
            <person name="Van Dorsselaer A."/>
            <person name="Carapito C."/>
        </authorList>
    </citation>
    <scope>CLEAVAGE OF TRANSIT PEPTIDE [LARGE SCALE ANALYSIS] AFTER LEU-56</scope>
    <scope>IDENTIFICATION BY MASS SPECTROMETRY [LARGE SCALE ANALYSIS]</scope>
</reference>
<reference key="14">
    <citation type="journal article" date="2004" name="J. Struct. Biol.">
        <title>Crystallography and mutagenesis point to an essential role for the N-terminus of human mitochondrial ClpP.</title>
        <authorList>
            <person name="Kang S.G."/>
            <person name="Maurizi M.R."/>
            <person name="Thompson M."/>
            <person name="Mueser T."/>
            <person name="Ahvazi B."/>
        </authorList>
    </citation>
    <scope>X-RAY CRYSTALLOGRAPHY (2.1 ANGSTROMS)</scope>
    <scope>FUNCTION</scope>
    <scope>CATALYTIC ACTIVITY</scope>
    <scope>SUBUNIT</scope>
    <scope>INTERACTION WITH CLPX</scope>
    <scope>MUTAGENESIS OF 58-LEU--ILE-61</scope>
</reference>
<reference key="15">
    <citation type="journal article" date="2013" name="Am. J. Hum. Genet.">
        <title>Perrault syndrome is caused by recessive mutations in CLPP, encoding a mitochondrial ATP-dependent chambered protease.</title>
        <authorList>
            <consortium name="University of Washington Center for Mendelian Genomics"/>
            <person name="Jenkinson E.M."/>
            <person name="Rehman A.U."/>
            <person name="Walsh T."/>
            <person name="Clayton-Smith J."/>
            <person name="Lee K."/>
            <person name="Morell R.J."/>
            <person name="Drummond M.C."/>
            <person name="Khan S.N."/>
            <person name="Naeem M.A."/>
            <person name="Rauf B."/>
            <person name="Billington N."/>
            <person name="Schultz J.M."/>
            <person name="Urquhart J.E."/>
            <person name="Lee M.K."/>
            <person name="Berry A."/>
            <person name="Hanley N.A."/>
            <person name="Mehta S."/>
            <person name="Cilliers D."/>
            <person name="Clayton P.E."/>
            <person name="Kingston H."/>
            <person name="Smith M.J."/>
            <person name="Warner T.T."/>
            <person name="Black G.C."/>
            <person name="Trump D."/>
            <person name="Davis J.R."/>
            <person name="Ahmad W."/>
            <person name="Leal S.M."/>
            <person name="Riazuddin S."/>
            <person name="King M.C."/>
            <person name="Friedman T.B."/>
            <person name="Newman W.G."/>
        </authorList>
    </citation>
    <scope>VARIANTS PRLTS3 PRO-145 AND SER-147</scope>
</reference>
<reference key="16">
    <citation type="journal article" date="2015" name="J. Neurol. Sci.">
        <title>Exome analysis identified a novel missense mutation in the CLPP gene in a consanguineous Saudi family expanding the clinical spectrum of Perrault Syndrome type-3.</title>
        <authorList>
            <person name="Ahmed S."/>
            <person name="Jelani M."/>
            <person name="Alrayes N."/>
            <person name="Mohamoud H.S."/>
            <person name="Almramhi M.M."/>
            <person name="Anshasi W."/>
            <person name="Ahmed N.A."/>
            <person name="Wang J."/>
            <person name="Nasir J."/>
            <person name="Al-Aama J.Y."/>
        </authorList>
    </citation>
    <scope>VARIANT PRLTS3 ASP-229</scope>
</reference>
<organism>
    <name type="scientific">Homo sapiens</name>
    <name type="common">Human</name>
    <dbReference type="NCBI Taxonomy" id="9606"/>
    <lineage>
        <taxon>Eukaryota</taxon>
        <taxon>Metazoa</taxon>
        <taxon>Chordata</taxon>
        <taxon>Craniata</taxon>
        <taxon>Vertebrata</taxon>
        <taxon>Euteleostomi</taxon>
        <taxon>Mammalia</taxon>
        <taxon>Eutheria</taxon>
        <taxon>Euarchontoglires</taxon>
        <taxon>Primates</taxon>
        <taxon>Haplorrhini</taxon>
        <taxon>Catarrhini</taxon>
        <taxon>Hominidae</taxon>
        <taxon>Homo</taxon>
    </lineage>
</organism>